<accession>P43320</accession>
<accession>Q9UCM8</accession>
<proteinExistence type="evidence at protein level"/>
<sequence>MASDHQTQAGKPQSLNPKIIIFEQENFQGHSHELNGPCPNLKETGVEKAGSVLVQAGPWVGYEQANCKGEQFVFEKGEYPRWDSWTSSRRTDSLSSLRPIKVDSQEHKIILYENPNFTGKKMEIIDDDVPSFHAHGYQEKVSSVRVQSGTWVGYQYPGYRGLQYLLEKGDYKDSSDFGAPHPQVQSVRRIRDMQWHQRGAFHPSN</sequence>
<name>CRBB2_HUMAN</name>
<protein>
    <recommendedName>
        <fullName>Beta-crystallin B2</fullName>
    </recommendedName>
    <alternativeName>
        <fullName>Beta-B2 crystallin</fullName>
    </alternativeName>
    <alternativeName>
        <fullName>Beta-crystallin Bp</fullName>
    </alternativeName>
</protein>
<comment type="function">
    <text>Crystallins are the dominant structural components of the vertebrate eye lens.</text>
</comment>
<comment type="subunit">
    <text evidence="1">Homo/heterodimer, or complexes of higher-order. The structure of beta-crystallin oligomers seems to be stabilized through interactions between the N-terminal arms (By similarity).</text>
</comment>
<comment type="interaction">
    <interactant intactId="EBI-974082">
        <id>P43320</id>
    </interactant>
    <interactant intactId="EBI-7043337">
        <id>P05813</id>
        <label>CRYBA1</label>
    </interactant>
    <organismsDiffer>false</organismsDiffer>
    <experiments>3</experiments>
</comment>
<comment type="interaction">
    <interactant intactId="EBI-974082">
        <id>P43320</id>
    </interactant>
    <interactant intactId="EBI-974082">
        <id>P43320</id>
        <label>CRYBB2</label>
    </interactant>
    <organismsDiffer>false</organismsDiffer>
    <experiments>5</experiments>
</comment>
<comment type="interaction">
    <interactant intactId="EBI-974082">
        <id>P43320</id>
    </interactant>
    <interactant intactId="EBI-2798728">
        <id>P61968</id>
        <label>LMO4</label>
    </interactant>
    <organismsDiffer>false</organismsDiffer>
    <experiments>3</experiments>
</comment>
<comment type="domain">
    <text>Has a two-domain beta-structure, folded into four very similar Greek key motifs.</text>
</comment>
<comment type="mass spectrometry"/>
<comment type="mass spectrometry"/>
<comment type="mass spectrometry"/>
<comment type="disease" evidence="3 5 6 7 8 12">
    <disease id="DI-01392">
        <name>Cataract 3, multiple types</name>
        <acronym>CTRCT3</acronym>
        <description>An opacification of the crystalline lens of the eye that frequently results in visual impairment or blindness. Opacities vary in morphology, are often confined to a portion of the lens, and may be static or progressive. CTRCT3 includes congenital cerulean and sutural cataract with punctate and cerulean opacities, among others. Cerulean cataract is characterized by peripheral bluish and white opacifications organized in concentric layers with occasional central lesions arranged radially. The opacities are observed in the superficial layers of the fetal nucleus as well as the adult nucleus of the lens. Involvement is usually bilateral. Visual acuity is only mildly reduced in childhood. In adulthood, the opacifications may progress, making lens extraction necessary. Histologically the lesions are described as fusiform cavities between lens fibers which contain a deeply staining granular material. Although the lesions may take on various colors, a dull blue is the most common appearance and is responsible for the designation cerulean cataract. Sutural cataract with punctate and cerulean opacities is characterized by white opacification around the anterior and posterior Y sutures, and grayish and bluish, spindle shaped, oval punctate and cerulean opacities of various sizes arranged in lamellar form. The spots are more concentrated towards the peripheral layers and do not delineate the embryonal or fetal nucleus. Phenotypic variation with respect to the size and density of the sutural opacities as well as the number and position of punctate and cerulean spots is observed among affected subjects.</description>
        <dbReference type="MIM" id="601547"/>
    </disease>
    <text>The disease is caused by variants affecting the gene represented in this entry.</text>
</comment>
<comment type="similarity">
    <text evidence="13">Belongs to the beta/gamma-crystallin family.</text>
</comment>
<comment type="online information" name="Eye disease Crystallin, beta-B2 (CRYBB2)">
    <link uri="https://databases.lovd.nl/shared/genes/CRYBB2"/>
    <text>Leiden Open Variation Database (LOVD)</text>
</comment>
<reference key="1">
    <citation type="journal article" date="1993" name="Gene">
        <title>Sequence of the human lens beta B2-crystallin-encoding cDNA.</title>
        <authorList>
            <person name="Chambers C."/>
            <person name="Russell P."/>
        </authorList>
    </citation>
    <scope>NUCLEOTIDE SEQUENCE [MRNA]</scope>
    <source>
        <tissue>Lens</tissue>
    </source>
</reference>
<reference key="2">
    <citation type="journal article" date="1997" name="Hum. Mol. Genet.">
        <title>Autosomal dominant cerulean cataract is associated with a chain termination mutation in the human beta-crystallin gene CRYBB2.</title>
        <authorList>
            <person name="Litt M."/>
            <person name="Carrero-Valenzuela R."/>
            <person name="Lamorticella D.M."/>
            <person name="Schultz D.W."/>
            <person name="Mitchell T.N."/>
            <person name="Kramer P."/>
            <person name="Maumenee I.H."/>
        </authorList>
    </citation>
    <scope>NUCLEOTIDE SEQUENCE [GENOMIC DNA]</scope>
    <scope>INVOLVEMENT IN CTRCT3</scope>
</reference>
<reference key="3">
    <citation type="journal article" date="2004" name="Genome Biol.">
        <title>A genome annotation-driven approach to cloning the human ORFeome.</title>
        <authorList>
            <person name="Collins J.E."/>
            <person name="Wright C.L."/>
            <person name="Edwards C.A."/>
            <person name="Davis M.P."/>
            <person name="Grinham J.A."/>
            <person name="Cole C.G."/>
            <person name="Goward M.E."/>
            <person name="Aguado B."/>
            <person name="Mallya M."/>
            <person name="Mokrab Y."/>
            <person name="Huckle E.J."/>
            <person name="Beare D.M."/>
            <person name="Dunham I."/>
        </authorList>
    </citation>
    <scope>NUCLEOTIDE SEQUENCE [LARGE SCALE MRNA]</scope>
</reference>
<reference key="4">
    <citation type="journal article" date="1999" name="Nature">
        <title>The DNA sequence of human chromosome 22.</title>
        <authorList>
            <person name="Dunham I."/>
            <person name="Hunt A.R."/>
            <person name="Collins J.E."/>
            <person name="Bruskiewich R."/>
            <person name="Beare D.M."/>
            <person name="Clamp M."/>
            <person name="Smink L.J."/>
            <person name="Ainscough R."/>
            <person name="Almeida J.P."/>
            <person name="Babbage A.K."/>
            <person name="Bagguley C."/>
            <person name="Bailey J."/>
            <person name="Barlow K.F."/>
            <person name="Bates K.N."/>
            <person name="Beasley O.P."/>
            <person name="Bird C.P."/>
            <person name="Blakey S.E."/>
            <person name="Bridgeman A.M."/>
            <person name="Buck D."/>
            <person name="Burgess J."/>
            <person name="Burrill W.D."/>
            <person name="Burton J."/>
            <person name="Carder C."/>
            <person name="Carter N.P."/>
            <person name="Chen Y."/>
            <person name="Clark G."/>
            <person name="Clegg S.M."/>
            <person name="Cobley V.E."/>
            <person name="Cole C.G."/>
            <person name="Collier R.E."/>
            <person name="Connor R."/>
            <person name="Conroy D."/>
            <person name="Corby N.R."/>
            <person name="Coville G.J."/>
            <person name="Cox A.V."/>
            <person name="Davis J."/>
            <person name="Dawson E."/>
            <person name="Dhami P.D."/>
            <person name="Dockree C."/>
            <person name="Dodsworth S.J."/>
            <person name="Durbin R.M."/>
            <person name="Ellington A.G."/>
            <person name="Evans K.L."/>
            <person name="Fey J.M."/>
            <person name="Fleming K."/>
            <person name="French L."/>
            <person name="Garner A.A."/>
            <person name="Gilbert J.G.R."/>
            <person name="Goward M.E."/>
            <person name="Grafham D.V."/>
            <person name="Griffiths M.N.D."/>
            <person name="Hall C."/>
            <person name="Hall R.E."/>
            <person name="Hall-Tamlyn G."/>
            <person name="Heathcott R.W."/>
            <person name="Ho S."/>
            <person name="Holmes S."/>
            <person name="Hunt S.E."/>
            <person name="Jones M.C."/>
            <person name="Kershaw J."/>
            <person name="Kimberley A.M."/>
            <person name="King A."/>
            <person name="Laird G.K."/>
            <person name="Langford C.F."/>
            <person name="Leversha M.A."/>
            <person name="Lloyd C."/>
            <person name="Lloyd D.M."/>
            <person name="Martyn I.D."/>
            <person name="Mashreghi-Mohammadi M."/>
            <person name="Matthews L.H."/>
            <person name="Mccann O.T."/>
            <person name="Mcclay J."/>
            <person name="Mclaren S."/>
            <person name="McMurray A.A."/>
            <person name="Milne S.A."/>
            <person name="Mortimore B.J."/>
            <person name="Odell C.N."/>
            <person name="Pavitt R."/>
            <person name="Pearce A.V."/>
            <person name="Pearson D."/>
            <person name="Phillimore B.J.C.T."/>
            <person name="Phillips S.H."/>
            <person name="Plumb R.W."/>
            <person name="Ramsay H."/>
            <person name="Ramsey Y."/>
            <person name="Rogers L."/>
            <person name="Ross M.T."/>
            <person name="Scott C.E."/>
            <person name="Sehra H.K."/>
            <person name="Skuce C.D."/>
            <person name="Smalley S."/>
            <person name="Smith M.L."/>
            <person name="Soderlund C."/>
            <person name="Spragon L."/>
            <person name="Steward C.A."/>
            <person name="Sulston J.E."/>
            <person name="Swann R.M."/>
            <person name="Vaudin M."/>
            <person name="Wall M."/>
            <person name="Wallis J.M."/>
            <person name="Whiteley M.N."/>
            <person name="Willey D.L."/>
            <person name="Williams L."/>
            <person name="Williams S.A."/>
            <person name="Williamson H."/>
            <person name="Wilmer T.E."/>
            <person name="Wilming L."/>
            <person name="Wright C.L."/>
            <person name="Hubbard T."/>
            <person name="Bentley D.R."/>
            <person name="Beck S."/>
            <person name="Rogers J."/>
            <person name="Shimizu N."/>
            <person name="Minoshima S."/>
            <person name="Kawasaki K."/>
            <person name="Sasaki T."/>
            <person name="Asakawa S."/>
            <person name="Kudoh J."/>
            <person name="Shintani A."/>
            <person name="Shibuya K."/>
            <person name="Yoshizaki Y."/>
            <person name="Aoki N."/>
            <person name="Mitsuyama S."/>
            <person name="Roe B.A."/>
            <person name="Chen F."/>
            <person name="Chu L."/>
            <person name="Crabtree J."/>
            <person name="Deschamps S."/>
            <person name="Do A."/>
            <person name="Do T."/>
            <person name="Dorman A."/>
            <person name="Fang F."/>
            <person name="Fu Y."/>
            <person name="Hu P."/>
            <person name="Hua A."/>
            <person name="Kenton S."/>
            <person name="Lai H."/>
            <person name="Lao H.I."/>
            <person name="Lewis J."/>
            <person name="Lewis S."/>
            <person name="Lin S.-P."/>
            <person name="Loh P."/>
            <person name="Malaj E."/>
            <person name="Nguyen T."/>
            <person name="Pan H."/>
            <person name="Phan S."/>
            <person name="Qi S."/>
            <person name="Qian Y."/>
            <person name="Ray L."/>
            <person name="Ren Q."/>
            <person name="Shaull S."/>
            <person name="Sloan D."/>
            <person name="Song L."/>
            <person name="Wang Q."/>
            <person name="Wang Y."/>
            <person name="Wang Z."/>
            <person name="White J."/>
            <person name="Willingham D."/>
            <person name="Wu H."/>
            <person name="Yao Z."/>
            <person name="Zhan M."/>
            <person name="Zhang G."/>
            <person name="Chissoe S."/>
            <person name="Murray J."/>
            <person name="Miller N."/>
            <person name="Minx P."/>
            <person name="Fulton R."/>
            <person name="Johnson D."/>
            <person name="Bemis G."/>
            <person name="Bentley D."/>
            <person name="Bradshaw H."/>
            <person name="Bourne S."/>
            <person name="Cordes M."/>
            <person name="Du Z."/>
            <person name="Fulton L."/>
            <person name="Goela D."/>
            <person name="Graves T."/>
            <person name="Hawkins J."/>
            <person name="Hinds K."/>
            <person name="Kemp K."/>
            <person name="Latreille P."/>
            <person name="Layman D."/>
            <person name="Ozersky P."/>
            <person name="Rohlfing T."/>
            <person name="Scheet P."/>
            <person name="Walker C."/>
            <person name="Wamsley A."/>
            <person name="Wohldmann P."/>
            <person name="Pepin K."/>
            <person name="Nelson J."/>
            <person name="Korf I."/>
            <person name="Bedell J.A."/>
            <person name="Hillier L.W."/>
            <person name="Mardis E."/>
            <person name="Waterston R."/>
            <person name="Wilson R."/>
            <person name="Emanuel B.S."/>
            <person name="Shaikh T."/>
            <person name="Kurahashi H."/>
            <person name="Saitta S."/>
            <person name="Budarf M.L."/>
            <person name="McDermid H.E."/>
            <person name="Johnson A."/>
            <person name="Wong A.C.C."/>
            <person name="Morrow B.E."/>
            <person name="Edelmann L."/>
            <person name="Kim U.J."/>
            <person name="Shizuya H."/>
            <person name="Simon M.I."/>
            <person name="Dumanski J.P."/>
            <person name="Peyrard M."/>
            <person name="Kedra D."/>
            <person name="Seroussi E."/>
            <person name="Fransson I."/>
            <person name="Tapia I."/>
            <person name="Bruder C.E."/>
            <person name="O'Brien K.P."/>
            <person name="Wilkinson P."/>
            <person name="Bodenteich A."/>
            <person name="Hartman K."/>
            <person name="Hu X."/>
            <person name="Khan A.S."/>
            <person name="Lane L."/>
            <person name="Tilahun Y."/>
            <person name="Wright H."/>
        </authorList>
    </citation>
    <scope>NUCLEOTIDE SEQUENCE [LARGE SCALE GENOMIC DNA]</scope>
</reference>
<reference key="5">
    <citation type="journal article" date="2004" name="Genome Res.">
        <title>The status, quality, and expansion of the NIH full-length cDNA project: the Mammalian Gene Collection (MGC).</title>
        <authorList>
            <consortium name="The MGC Project Team"/>
        </authorList>
    </citation>
    <scope>NUCLEOTIDE SEQUENCE [LARGE SCALE MRNA]</scope>
</reference>
<reference key="6">
    <citation type="journal article" date="1993" name="Protein Sci.">
        <title>Amino acid sequence of human lens beta B2-crystallin.</title>
        <authorList>
            <person name="Miesbauer L.R."/>
            <person name="Smith J.B."/>
            <person name="Smith D.L."/>
        </authorList>
    </citation>
    <scope>PROTEIN SEQUENCE OF 2-205</scope>
    <scope>CLEAVAGE OF INITIATOR METHIONINE</scope>
    <scope>ACETYLATION AT ALA-2</scope>
    <source>
        <tissue>Lens</tissue>
    </source>
</reference>
<reference key="7">
    <citation type="journal article" date="1997" name="J. Biol. Chem.">
        <title>Sequence analysis of betaA3, betaB3, and betaA4 crystallins completes the identification of the major proteins in young human lens.</title>
        <authorList>
            <person name="Lampi K.J."/>
            <person name="Ma Z."/>
            <person name="Shih M."/>
            <person name="Shearer T.R."/>
            <person name="Smith J.B."/>
            <person name="Smith D.L."/>
            <person name="David L.L."/>
        </authorList>
    </citation>
    <scope>PROTEIN SEQUENCE OF 192-205</scope>
    <scope>MASS SPECTROMETRY</scope>
</reference>
<reference key="8">
    <citation type="journal article" date="1992" name="Curr. Eye Res.">
        <title>Two-dimensional gel electrophoretic analysis of human lens proteins.</title>
        <authorList>
            <person name="Datiles M.B."/>
            <person name="Schumer D.J."/>
            <person name="Zigler J.S. Jr."/>
            <person name="Russell P."/>
            <person name="Anderson L."/>
            <person name="Garland D."/>
        </authorList>
    </citation>
    <scope>PROTEIN SEQUENCE OF 123-142</scope>
    <source>
        <tissue>Lens</tissue>
    </source>
</reference>
<reference key="9">
    <citation type="journal article" date="1994" name="J. Biol. Chem.">
        <title>Post-translational modifications of water-soluble human lens crystallins from young adults.</title>
        <authorList>
            <person name="Miesbauer L.R."/>
            <person name="Zhou X."/>
            <person name="Yang Z."/>
            <person name="Yang Z."/>
            <person name="Sun Y."/>
            <person name="Smith D.L."/>
            <person name="Smith J.B."/>
        </authorList>
    </citation>
    <scope>MASS SPECTROMETRY</scope>
</reference>
<reference key="10">
    <citation type="journal article" date="2000" name="Exp. Eye Res.">
        <title>The major in vivo modifications of the human water-insoluble lens crystallins are disulfide bonds, deamidation, methionine oxidation and backbone cleavage.</title>
        <authorList>
            <person name="Hanson S.R.A."/>
            <person name="Hasan A."/>
            <person name="Smith D.L."/>
            <person name="Smith J.B."/>
        </authorList>
    </citation>
    <scope>MASS SPECTROMETRY</scope>
</reference>
<reference key="11">
    <citation type="journal article" date="2000" name="Invest. Ophthalmol. Vis. Sci.">
        <title>Genetic heterogeneity of the Coppock-like cataract: a mutation in CRYBB2 on chromosome 22q11.2.</title>
        <authorList>
            <person name="Gill D."/>
            <person name="Klose R."/>
            <person name="Munier F.L."/>
            <person name="McFadden M."/>
            <person name="Priston M."/>
            <person name="Billingsley G."/>
            <person name="Ducrey N."/>
            <person name="Schorderet D.F."/>
            <person name="Heon E."/>
        </authorList>
    </citation>
    <scope>INVOLVEMENT IN CTRCT3</scope>
</reference>
<reference key="12">
    <citation type="journal article" date="2017" name="G3 (Bethesda)">
        <title>High-Throughput Genetic Screening of 51 Pediatric Cataract Genes Identifies Causative Mutations in Inherited Pediatric Cataract in South Eastern Australia.</title>
        <authorList>
            <person name="Javadiyan S."/>
            <person name="Craig J.E."/>
            <person name="Souzeau E."/>
            <person name="Sharma S."/>
            <person name="Lower K.M."/>
            <person name="Mackey D.A."/>
            <person name="Staffieri S.E."/>
            <person name="Elder J.E."/>
            <person name="Taranath D."/>
            <person name="Straga T."/>
            <person name="Black J."/>
            <person name="Pater J."/>
            <person name="Casey T."/>
            <person name="Hewitt A.W."/>
            <person name="Burdon K.P."/>
        </authorList>
    </citation>
    <scope>VARIANTS CTRCT3 LEU-188 AND 155-GLN--ASN-205 DEL</scope>
</reference>
<reference key="13">
    <citation type="journal article" date="2017" name="Mol. Vis.">
        <title>Mutations in crystallin genes result in congenital cataract associated with other ocular abnormalities.</title>
        <authorList>
            <person name="Sun Z."/>
            <person name="Zhou Q."/>
            <person name="Li H."/>
            <person name="Yang L."/>
            <person name="Wu S."/>
            <person name="Sui R."/>
        </authorList>
    </citation>
    <scope>VARIANT CTRCT3 VAL-149</scope>
</reference>
<reference key="14">
    <citation type="journal article" date="2017" name="Sci. Rep.">
        <title>Two novel mutations identified in ADCC families impair crystallin protein distribution and induce apoptosis in human lens epithelial cells.</title>
        <authorList>
            <person name="Li L."/>
            <person name="Fan D.B."/>
            <person name="Zhao Y.T."/>
            <person name="Li Y."/>
            <person name="Kong D.Q."/>
            <person name="Cai F.F."/>
            <person name="Zheng G.Y."/>
        </authorList>
    </citation>
    <scope>VARIANT CTRCT3 LEU-146</scope>
</reference>
<reference key="15">
    <citation type="journal article" date="2019" name="Mol. Vis.">
        <title>Mutation screening of crystallin genes in Chinese families with congenital cataracts.</title>
        <authorList>
            <person name="Zhuang J."/>
            <person name="Cao Z."/>
            <person name="Zhu Y."/>
            <person name="Liu L."/>
            <person name="Tong Y."/>
            <person name="Chen X."/>
            <person name="Wang Y."/>
            <person name="Lu C."/>
            <person name="Ma X."/>
            <person name="Yang J."/>
        </authorList>
    </citation>
    <scope>VARIANT CTRCT3 LYS-155</scope>
</reference>
<reference key="16">
    <citation type="journal article" date="2007" name="Protein Sci.">
        <title>Mutation of interfaces in domain-swapped human betaB2-crystallin.</title>
        <authorList>
            <person name="Smith M.A."/>
            <person name="Bateman O.A."/>
            <person name="Jaenicke R."/>
            <person name="Slingsby C."/>
        </authorList>
    </citation>
    <scope>X-RAY CRYSTALLOGRAPHY (1.7 ANGSTROMS) OF 2-205</scope>
    <scope>SUBUNIT</scope>
    <scope>IDENTIFICATION BY MASS SPECTROMETRY</scope>
</reference>
<dbReference type="EMBL" id="L10035">
    <property type="protein sequence ID" value="AAA16864.1"/>
    <property type="molecule type" value="mRNA"/>
</dbReference>
<dbReference type="EMBL" id="U72404">
    <property type="protein sequence ID" value="AAB39700.1"/>
    <property type="molecule type" value="Genomic_DNA"/>
</dbReference>
<dbReference type="EMBL" id="U72400">
    <property type="protein sequence ID" value="AAB39700.1"/>
    <property type="status" value="JOINED"/>
    <property type="molecule type" value="Genomic_DNA"/>
</dbReference>
<dbReference type="EMBL" id="U72401">
    <property type="protein sequence ID" value="AAB39700.1"/>
    <property type="status" value="JOINED"/>
    <property type="molecule type" value="Genomic_DNA"/>
</dbReference>
<dbReference type="EMBL" id="U72402">
    <property type="protein sequence ID" value="AAB39700.1"/>
    <property type="status" value="JOINED"/>
    <property type="molecule type" value="Genomic_DNA"/>
</dbReference>
<dbReference type="EMBL" id="U72403">
    <property type="protein sequence ID" value="AAB39700.1"/>
    <property type="status" value="JOINED"/>
    <property type="molecule type" value="Genomic_DNA"/>
</dbReference>
<dbReference type="EMBL" id="CR456426">
    <property type="protein sequence ID" value="CAG30312.1"/>
    <property type="molecule type" value="mRNA"/>
</dbReference>
<dbReference type="EMBL" id="Z99916">
    <property type="status" value="NOT_ANNOTATED_CDS"/>
    <property type="molecule type" value="Genomic_DNA"/>
</dbReference>
<dbReference type="EMBL" id="BC069535">
    <property type="protein sequence ID" value="AAH69535.1"/>
    <property type="molecule type" value="mRNA"/>
</dbReference>
<dbReference type="CCDS" id="CCDS13831.1"/>
<dbReference type="PIR" id="JC2009">
    <property type="entry name" value="JC2009"/>
</dbReference>
<dbReference type="RefSeq" id="NP_000487.1">
    <property type="nucleotide sequence ID" value="NM_000496.3"/>
</dbReference>
<dbReference type="RefSeq" id="XP_006724204.1">
    <property type="nucleotide sequence ID" value="XM_006724141.4"/>
</dbReference>
<dbReference type="RefSeq" id="XP_011528202.1">
    <property type="nucleotide sequence ID" value="XM_011529900.2"/>
</dbReference>
<dbReference type="RefSeq" id="XP_054181089.1">
    <property type="nucleotide sequence ID" value="XM_054325114.1"/>
</dbReference>
<dbReference type="RefSeq" id="XP_054181090.1">
    <property type="nucleotide sequence ID" value="XM_054325115.1"/>
</dbReference>
<dbReference type="PDB" id="1YTQ">
    <property type="method" value="X-ray"/>
    <property type="resolution" value="1.70 A"/>
    <property type="chains" value="A=2-205"/>
</dbReference>
<dbReference type="PDB" id="7K7U">
    <property type="method" value="X-ray"/>
    <property type="resolution" value="3.03 A"/>
    <property type="chains" value="A/B/C/D/E/F/G/H/I/J/K/L=1-205"/>
</dbReference>
<dbReference type="PDBsum" id="1YTQ"/>
<dbReference type="PDBsum" id="7K7U"/>
<dbReference type="PCDDB" id="P43320"/>
<dbReference type="SASBDB" id="P43320"/>
<dbReference type="SMR" id="P43320"/>
<dbReference type="BioGRID" id="107805">
    <property type="interactions" value="8"/>
</dbReference>
<dbReference type="FunCoup" id="P43320">
    <property type="interactions" value="12"/>
</dbReference>
<dbReference type="IntAct" id="P43320">
    <property type="interactions" value="7"/>
</dbReference>
<dbReference type="MINT" id="P43320"/>
<dbReference type="STRING" id="9606.ENSP00000498905"/>
<dbReference type="ChEMBL" id="CHEMBL4296284"/>
<dbReference type="iPTMnet" id="P43320"/>
<dbReference type="PhosphoSitePlus" id="P43320"/>
<dbReference type="BioMuta" id="CRYBB2"/>
<dbReference type="DMDM" id="1169091"/>
<dbReference type="MassIVE" id="P43320"/>
<dbReference type="PaxDb" id="9606-ENSP00000381273"/>
<dbReference type="PeptideAtlas" id="P43320"/>
<dbReference type="PRIDE" id="P43320"/>
<dbReference type="ProteomicsDB" id="55612"/>
<dbReference type="Antibodypedia" id="35320">
    <property type="antibodies" value="127 antibodies from 24 providers"/>
</dbReference>
<dbReference type="DNASU" id="1415"/>
<dbReference type="Ensembl" id="ENST00000398215.3">
    <property type="protein sequence ID" value="ENSP00000381273.2"/>
    <property type="gene ID" value="ENSG00000244752.3"/>
</dbReference>
<dbReference type="Ensembl" id="ENST00000651629.1">
    <property type="protein sequence ID" value="ENSP00000498905.1"/>
    <property type="gene ID" value="ENSG00000244752.3"/>
</dbReference>
<dbReference type="GeneID" id="1415"/>
<dbReference type="KEGG" id="hsa:1415"/>
<dbReference type="MANE-Select" id="ENST00000398215.3">
    <property type="protein sequence ID" value="ENSP00000381273.2"/>
    <property type="RefSeq nucleotide sequence ID" value="NM_000496.3"/>
    <property type="RefSeq protein sequence ID" value="NP_000487.1"/>
</dbReference>
<dbReference type="AGR" id="HGNC:2398"/>
<dbReference type="CTD" id="1415"/>
<dbReference type="DisGeNET" id="1415"/>
<dbReference type="GeneCards" id="CRYBB2"/>
<dbReference type="HGNC" id="HGNC:2398">
    <property type="gene designation" value="CRYBB2"/>
</dbReference>
<dbReference type="HPA" id="ENSG00000244752">
    <property type="expression patterns" value="Tissue enhanced (brain)"/>
</dbReference>
<dbReference type="MalaCards" id="CRYBB2"/>
<dbReference type="MIM" id="123620">
    <property type="type" value="gene"/>
</dbReference>
<dbReference type="MIM" id="601547">
    <property type="type" value="phenotype"/>
</dbReference>
<dbReference type="neXtProt" id="NX_P43320"/>
<dbReference type="OpenTargets" id="ENSG00000244752"/>
<dbReference type="Orphanet" id="1377">
    <property type="disease" value="Cataract-microcornea syndrome"/>
</dbReference>
<dbReference type="Orphanet" id="98989">
    <property type="disease" value="Cerulean cataract"/>
</dbReference>
<dbReference type="Orphanet" id="98991">
    <property type="disease" value="Early-onset nuclear cataract"/>
</dbReference>
<dbReference type="Orphanet" id="441447">
    <property type="disease" value="Early-onset posterior subcapsular cataract"/>
</dbReference>
<dbReference type="Orphanet" id="98985">
    <property type="disease" value="Early-onset sutural cataract"/>
</dbReference>
<dbReference type="Orphanet" id="98984">
    <property type="disease" value="Pulverulent cataract"/>
</dbReference>
<dbReference type="Orphanet" id="98994">
    <property type="disease" value="Total early-onset cataract"/>
</dbReference>
<dbReference type="PharmGKB" id="PA26912"/>
<dbReference type="VEuPathDB" id="HostDB:ENSG00000244752"/>
<dbReference type="eggNOG" id="ENOG502QVM6">
    <property type="taxonomic scope" value="Eukaryota"/>
</dbReference>
<dbReference type="GeneTree" id="ENSGT00940000160048"/>
<dbReference type="HOGENOM" id="CLU_081883_0_1_1"/>
<dbReference type="InParanoid" id="P43320"/>
<dbReference type="OMA" id="FRPIKQD"/>
<dbReference type="OrthoDB" id="8525367at2759"/>
<dbReference type="PAN-GO" id="P43320">
    <property type="GO annotations" value="3 GO annotations based on evolutionary models"/>
</dbReference>
<dbReference type="PhylomeDB" id="P43320"/>
<dbReference type="TreeFam" id="TF331401"/>
<dbReference type="PathwayCommons" id="P43320"/>
<dbReference type="SignaLink" id="P43320"/>
<dbReference type="SIGNOR" id="P43320"/>
<dbReference type="BioGRID-ORCS" id="1415">
    <property type="hits" value="10 hits in 1155 CRISPR screens"/>
</dbReference>
<dbReference type="ChiTaRS" id="CRYBB2">
    <property type="organism name" value="human"/>
</dbReference>
<dbReference type="EvolutionaryTrace" id="P43320"/>
<dbReference type="GeneWiki" id="CRYBB2"/>
<dbReference type="GenomeRNAi" id="1415"/>
<dbReference type="Pharos" id="P43320">
    <property type="development level" value="Tbio"/>
</dbReference>
<dbReference type="PRO" id="PR:P43320"/>
<dbReference type="Proteomes" id="UP000005640">
    <property type="component" value="Chromosome 22"/>
</dbReference>
<dbReference type="RNAct" id="P43320">
    <property type="molecule type" value="protein"/>
</dbReference>
<dbReference type="Bgee" id="ENSG00000244752">
    <property type="expression patterns" value="Expressed in stromal cell of endometrium and 114 other cell types or tissues"/>
</dbReference>
<dbReference type="ExpressionAtlas" id="P43320">
    <property type="expression patterns" value="baseline and differential"/>
</dbReference>
<dbReference type="GO" id="GO:0042802">
    <property type="term" value="F:identical protein binding"/>
    <property type="evidence" value="ECO:0000353"/>
    <property type="project" value="IntAct"/>
</dbReference>
<dbReference type="GO" id="GO:0005212">
    <property type="term" value="F:structural constituent of eye lens"/>
    <property type="evidence" value="ECO:0000318"/>
    <property type="project" value="GO_Central"/>
</dbReference>
<dbReference type="GO" id="GO:0005198">
    <property type="term" value="F:structural molecule activity"/>
    <property type="evidence" value="ECO:0000303"/>
    <property type="project" value="ProtInc"/>
</dbReference>
<dbReference type="GO" id="GO:0002088">
    <property type="term" value="P:lens development in camera-type eye"/>
    <property type="evidence" value="ECO:0000318"/>
    <property type="project" value="GO_Central"/>
</dbReference>
<dbReference type="GO" id="GO:0007601">
    <property type="term" value="P:visual perception"/>
    <property type="evidence" value="ECO:0000318"/>
    <property type="project" value="GO_Central"/>
</dbReference>
<dbReference type="FunFam" id="2.60.20.10:FF:000005">
    <property type="entry name" value="Crystallin, beta B1"/>
    <property type="match status" value="1"/>
</dbReference>
<dbReference type="FunFam" id="2.60.20.10:FF:000002">
    <property type="entry name" value="Crystallin, beta B2"/>
    <property type="match status" value="1"/>
</dbReference>
<dbReference type="Gene3D" id="2.60.20.10">
    <property type="entry name" value="Crystallins"/>
    <property type="match status" value="2"/>
</dbReference>
<dbReference type="InterPro" id="IPR050252">
    <property type="entry name" value="Beta/Gamma-Crystallin"/>
</dbReference>
<dbReference type="InterPro" id="IPR001064">
    <property type="entry name" value="Beta/gamma_crystallin"/>
</dbReference>
<dbReference type="InterPro" id="IPR011024">
    <property type="entry name" value="G_crystallin-like"/>
</dbReference>
<dbReference type="PANTHER" id="PTHR11818:SF11">
    <property type="entry name" value="BETA-CRYSTALLIN B2"/>
    <property type="match status" value="1"/>
</dbReference>
<dbReference type="PANTHER" id="PTHR11818">
    <property type="entry name" value="BETA/GAMMA CRYSTALLIN"/>
    <property type="match status" value="1"/>
</dbReference>
<dbReference type="Pfam" id="PF00030">
    <property type="entry name" value="Crystall"/>
    <property type="match status" value="2"/>
</dbReference>
<dbReference type="PRINTS" id="PR01367">
    <property type="entry name" value="BGCRYSTALLIN"/>
</dbReference>
<dbReference type="SMART" id="SM00247">
    <property type="entry name" value="XTALbg"/>
    <property type="match status" value="2"/>
</dbReference>
<dbReference type="SUPFAM" id="SSF49695">
    <property type="entry name" value="gamma-Crystallin-like"/>
    <property type="match status" value="1"/>
</dbReference>
<dbReference type="PROSITE" id="PS50915">
    <property type="entry name" value="CRYSTALLIN_BETA_GAMMA"/>
    <property type="match status" value="4"/>
</dbReference>
<gene>
    <name type="primary">CRYBB2</name>
    <name type="synonym">CRYB2</name>
    <name type="synonym">CRYB2A</name>
</gene>
<feature type="initiator methionine" description="Removed" evidence="10">
    <location>
        <position position="1"/>
    </location>
</feature>
<feature type="chain" id="PRO_0000057553" description="Beta-crystallin B2">
    <location>
        <begin position="2"/>
        <end position="205"/>
    </location>
</feature>
<feature type="domain" description="Beta/gamma crystallin 'Greek key' 1" evidence="2">
    <location>
        <begin position="17"/>
        <end position="56"/>
    </location>
</feature>
<feature type="domain" description="Beta/gamma crystallin 'Greek key' 2" evidence="2">
    <location>
        <begin position="57"/>
        <end position="101"/>
    </location>
</feature>
<feature type="domain" description="Beta/gamma crystallin 'Greek key' 3" evidence="2">
    <location>
        <begin position="107"/>
        <end position="148"/>
    </location>
</feature>
<feature type="domain" description="Beta/gamma crystallin 'Greek key' 4" evidence="2">
    <location>
        <begin position="149"/>
        <end position="191"/>
    </location>
</feature>
<feature type="region of interest" description="N-terminal arm">
    <location>
        <begin position="2"/>
        <end position="16"/>
    </location>
</feature>
<feature type="region of interest" description="Connecting peptide">
    <location>
        <begin position="102"/>
        <end position="106"/>
    </location>
</feature>
<feature type="region of interest" description="C-terminal arm">
    <location>
        <begin position="193"/>
        <end position="205"/>
    </location>
</feature>
<feature type="modified residue" description="N-acetylalanine" evidence="10">
    <location>
        <position position="2"/>
    </location>
</feature>
<feature type="sequence variant" id="VAR_038431" description="In dbSNP:rs16986560.">
    <original>A</original>
    <variation>S</variation>
    <location>
        <position position="65"/>
    </location>
</feature>
<feature type="sequence variant" id="VAR_084787" description="In CTRCT3; uncertain significance." evidence="6">
    <original>V</original>
    <variation>L</variation>
    <location>
        <position position="146"/>
    </location>
</feature>
<feature type="sequence variant" id="VAR_084788" description="In CTRCT3; uncertain significance." evidence="7">
    <original>G</original>
    <variation>V</variation>
    <location>
        <position position="149"/>
    </location>
</feature>
<feature type="sequence variant" id="VAR_084789" description="In CTRCT3." evidence="5">
    <location>
        <begin position="155"/>
        <end position="205"/>
    </location>
</feature>
<feature type="sequence variant" id="VAR_084790" description="In CTRCT3; uncertain significance." evidence="8">
    <original>Q</original>
    <variation>K</variation>
    <location>
        <position position="155"/>
    </location>
</feature>
<feature type="sequence variant" id="VAR_084791" description="In CTRCT3; uncertain significance." evidence="5">
    <original>R</original>
    <variation>L</variation>
    <location>
        <position position="188"/>
    </location>
</feature>
<feature type="strand" evidence="14">
    <location>
        <begin position="18"/>
        <end position="24"/>
    </location>
</feature>
<feature type="helix" evidence="15">
    <location>
        <begin position="25"/>
        <end position="27"/>
    </location>
</feature>
<feature type="strand" evidence="14">
    <location>
        <begin position="31"/>
        <end position="36"/>
    </location>
</feature>
<feature type="helix" evidence="14">
    <location>
        <begin position="41"/>
        <end position="44"/>
    </location>
</feature>
<feature type="strand" evidence="14">
    <location>
        <begin position="50"/>
        <end position="56"/>
    </location>
</feature>
<feature type="strand" evidence="14">
    <location>
        <begin position="59"/>
        <end position="64"/>
    </location>
</feature>
<feature type="turn" evidence="14">
    <location>
        <begin position="65"/>
        <end position="67"/>
    </location>
</feature>
<feature type="strand" evidence="14">
    <location>
        <begin position="68"/>
        <end position="74"/>
    </location>
</feature>
<feature type="strand" evidence="14">
    <location>
        <begin position="76"/>
        <end position="79"/>
    </location>
</feature>
<feature type="helix" evidence="14">
    <location>
        <begin position="82"/>
        <end position="84"/>
    </location>
</feature>
<feature type="strand" evidence="14">
    <location>
        <begin position="96"/>
        <end position="99"/>
    </location>
</feature>
<feature type="strand" evidence="14">
    <location>
        <begin position="108"/>
        <end position="114"/>
    </location>
</feature>
<feature type="turn" evidence="14">
    <location>
        <begin position="115"/>
        <end position="117"/>
    </location>
</feature>
<feature type="strand" evidence="14">
    <location>
        <begin position="118"/>
        <end position="127"/>
    </location>
</feature>
<feature type="helix" evidence="14">
    <location>
        <begin position="133"/>
        <end position="135"/>
    </location>
</feature>
<feature type="strand" evidence="14">
    <location>
        <begin position="143"/>
        <end position="146"/>
    </location>
</feature>
<feature type="strand" evidence="14">
    <location>
        <begin position="151"/>
        <end position="156"/>
    </location>
</feature>
<feature type="turn" evidence="14">
    <location>
        <begin position="157"/>
        <end position="159"/>
    </location>
</feature>
<feature type="strand" evidence="14">
    <location>
        <begin position="160"/>
        <end position="166"/>
    </location>
</feature>
<feature type="strand" evidence="14">
    <location>
        <begin position="168"/>
        <end position="171"/>
    </location>
</feature>
<feature type="helix" evidence="14">
    <location>
        <begin position="174"/>
        <end position="177"/>
    </location>
</feature>
<feature type="strand" evidence="14">
    <location>
        <begin position="180"/>
        <end position="182"/>
    </location>
</feature>
<feature type="strand" evidence="14">
    <location>
        <begin position="186"/>
        <end position="189"/>
    </location>
</feature>
<evidence type="ECO:0000250" key="1"/>
<evidence type="ECO:0000255" key="2">
    <source>
        <dbReference type="PROSITE-ProRule" id="PRU00028"/>
    </source>
</evidence>
<evidence type="ECO:0000269" key="3">
    <source>
    </source>
</evidence>
<evidence type="ECO:0000269" key="4">
    <source>
    </source>
</evidence>
<evidence type="ECO:0000269" key="5">
    <source>
    </source>
</evidence>
<evidence type="ECO:0000269" key="6">
    <source>
    </source>
</evidence>
<evidence type="ECO:0000269" key="7">
    <source>
    </source>
</evidence>
<evidence type="ECO:0000269" key="8">
    <source>
    </source>
</evidence>
<evidence type="ECO:0000269" key="9">
    <source>
    </source>
</evidence>
<evidence type="ECO:0000269" key="10">
    <source>
    </source>
</evidence>
<evidence type="ECO:0000269" key="11">
    <source>
    </source>
</evidence>
<evidence type="ECO:0000269" key="12">
    <source>
    </source>
</evidence>
<evidence type="ECO:0000305" key="13"/>
<evidence type="ECO:0007829" key="14">
    <source>
        <dbReference type="PDB" id="1YTQ"/>
    </source>
</evidence>
<evidence type="ECO:0007829" key="15">
    <source>
        <dbReference type="PDB" id="7K7U"/>
    </source>
</evidence>
<keyword id="KW-0002">3D-structure</keyword>
<keyword id="KW-0007">Acetylation</keyword>
<keyword id="KW-0898">Cataract</keyword>
<keyword id="KW-0903">Direct protein sequencing</keyword>
<keyword id="KW-0225">Disease variant</keyword>
<keyword id="KW-0273">Eye lens protein</keyword>
<keyword id="KW-1267">Proteomics identification</keyword>
<keyword id="KW-1185">Reference proteome</keyword>
<keyword id="KW-0677">Repeat</keyword>
<keyword id="KW-0716">Sensory transduction</keyword>
<keyword id="KW-0844">Vision</keyword>
<organism>
    <name type="scientific">Homo sapiens</name>
    <name type="common">Human</name>
    <dbReference type="NCBI Taxonomy" id="9606"/>
    <lineage>
        <taxon>Eukaryota</taxon>
        <taxon>Metazoa</taxon>
        <taxon>Chordata</taxon>
        <taxon>Craniata</taxon>
        <taxon>Vertebrata</taxon>
        <taxon>Euteleostomi</taxon>
        <taxon>Mammalia</taxon>
        <taxon>Eutheria</taxon>
        <taxon>Euarchontoglires</taxon>
        <taxon>Primates</taxon>
        <taxon>Haplorrhini</taxon>
        <taxon>Catarrhini</taxon>
        <taxon>Hominidae</taxon>
        <taxon>Homo</taxon>
    </lineage>
</organism>